<reference key="1">
    <citation type="journal article" date="2005" name="Science">
        <title>The transcriptional landscape of the mammalian genome.</title>
        <authorList>
            <person name="Carninci P."/>
            <person name="Kasukawa T."/>
            <person name="Katayama S."/>
            <person name="Gough J."/>
            <person name="Frith M.C."/>
            <person name="Maeda N."/>
            <person name="Oyama R."/>
            <person name="Ravasi T."/>
            <person name="Lenhard B."/>
            <person name="Wells C."/>
            <person name="Kodzius R."/>
            <person name="Shimokawa K."/>
            <person name="Bajic V.B."/>
            <person name="Brenner S.E."/>
            <person name="Batalov S."/>
            <person name="Forrest A.R."/>
            <person name="Zavolan M."/>
            <person name="Davis M.J."/>
            <person name="Wilming L.G."/>
            <person name="Aidinis V."/>
            <person name="Allen J.E."/>
            <person name="Ambesi-Impiombato A."/>
            <person name="Apweiler R."/>
            <person name="Aturaliya R.N."/>
            <person name="Bailey T.L."/>
            <person name="Bansal M."/>
            <person name="Baxter L."/>
            <person name="Beisel K.W."/>
            <person name="Bersano T."/>
            <person name="Bono H."/>
            <person name="Chalk A.M."/>
            <person name="Chiu K.P."/>
            <person name="Choudhary V."/>
            <person name="Christoffels A."/>
            <person name="Clutterbuck D.R."/>
            <person name="Crowe M.L."/>
            <person name="Dalla E."/>
            <person name="Dalrymple B.P."/>
            <person name="de Bono B."/>
            <person name="Della Gatta G."/>
            <person name="di Bernardo D."/>
            <person name="Down T."/>
            <person name="Engstrom P."/>
            <person name="Fagiolini M."/>
            <person name="Faulkner G."/>
            <person name="Fletcher C.F."/>
            <person name="Fukushima T."/>
            <person name="Furuno M."/>
            <person name="Futaki S."/>
            <person name="Gariboldi M."/>
            <person name="Georgii-Hemming P."/>
            <person name="Gingeras T.R."/>
            <person name="Gojobori T."/>
            <person name="Green R.E."/>
            <person name="Gustincich S."/>
            <person name="Harbers M."/>
            <person name="Hayashi Y."/>
            <person name="Hensch T.K."/>
            <person name="Hirokawa N."/>
            <person name="Hill D."/>
            <person name="Huminiecki L."/>
            <person name="Iacono M."/>
            <person name="Ikeo K."/>
            <person name="Iwama A."/>
            <person name="Ishikawa T."/>
            <person name="Jakt M."/>
            <person name="Kanapin A."/>
            <person name="Katoh M."/>
            <person name="Kawasawa Y."/>
            <person name="Kelso J."/>
            <person name="Kitamura H."/>
            <person name="Kitano H."/>
            <person name="Kollias G."/>
            <person name="Krishnan S.P."/>
            <person name="Kruger A."/>
            <person name="Kummerfeld S.K."/>
            <person name="Kurochkin I.V."/>
            <person name="Lareau L.F."/>
            <person name="Lazarevic D."/>
            <person name="Lipovich L."/>
            <person name="Liu J."/>
            <person name="Liuni S."/>
            <person name="McWilliam S."/>
            <person name="Madan Babu M."/>
            <person name="Madera M."/>
            <person name="Marchionni L."/>
            <person name="Matsuda H."/>
            <person name="Matsuzawa S."/>
            <person name="Miki H."/>
            <person name="Mignone F."/>
            <person name="Miyake S."/>
            <person name="Morris K."/>
            <person name="Mottagui-Tabar S."/>
            <person name="Mulder N."/>
            <person name="Nakano N."/>
            <person name="Nakauchi H."/>
            <person name="Ng P."/>
            <person name="Nilsson R."/>
            <person name="Nishiguchi S."/>
            <person name="Nishikawa S."/>
            <person name="Nori F."/>
            <person name="Ohara O."/>
            <person name="Okazaki Y."/>
            <person name="Orlando V."/>
            <person name="Pang K.C."/>
            <person name="Pavan W.J."/>
            <person name="Pavesi G."/>
            <person name="Pesole G."/>
            <person name="Petrovsky N."/>
            <person name="Piazza S."/>
            <person name="Reed J."/>
            <person name="Reid J.F."/>
            <person name="Ring B.Z."/>
            <person name="Ringwald M."/>
            <person name="Rost B."/>
            <person name="Ruan Y."/>
            <person name="Salzberg S.L."/>
            <person name="Sandelin A."/>
            <person name="Schneider C."/>
            <person name="Schoenbach C."/>
            <person name="Sekiguchi K."/>
            <person name="Semple C.A."/>
            <person name="Seno S."/>
            <person name="Sessa L."/>
            <person name="Sheng Y."/>
            <person name="Shibata Y."/>
            <person name="Shimada H."/>
            <person name="Shimada K."/>
            <person name="Silva D."/>
            <person name="Sinclair B."/>
            <person name="Sperling S."/>
            <person name="Stupka E."/>
            <person name="Sugiura K."/>
            <person name="Sultana R."/>
            <person name="Takenaka Y."/>
            <person name="Taki K."/>
            <person name="Tammoja K."/>
            <person name="Tan S.L."/>
            <person name="Tang S."/>
            <person name="Taylor M.S."/>
            <person name="Tegner J."/>
            <person name="Teichmann S.A."/>
            <person name="Ueda H.R."/>
            <person name="van Nimwegen E."/>
            <person name="Verardo R."/>
            <person name="Wei C.L."/>
            <person name="Yagi K."/>
            <person name="Yamanishi H."/>
            <person name="Zabarovsky E."/>
            <person name="Zhu S."/>
            <person name="Zimmer A."/>
            <person name="Hide W."/>
            <person name="Bult C."/>
            <person name="Grimmond S.M."/>
            <person name="Teasdale R.D."/>
            <person name="Liu E.T."/>
            <person name="Brusic V."/>
            <person name="Quackenbush J."/>
            <person name="Wahlestedt C."/>
            <person name="Mattick J.S."/>
            <person name="Hume D.A."/>
            <person name="Kai C."/>
            <person name="Sasaki D."/>
            <person name="Tomaru Y."/>
            <person name="Fukuda S."/>
            <person name="Kanamori-Katayama M."/>
            <person name="Suzuki M."/>
            <person name="Aoki J."/>
            <person name="Arakawa T."/>
            <person name="Iida J."/>
            <person name="Imamura K."/>
            <person name="Itoh M."/>
            <person name="Kato T."/>
            <person name="Kawaji H."/>
            <person name="Kawagashira N."/>
            <person name="Kawashima T."/>
            <person name="Kojima M."/>
            <person name="Kondo S."/>
            <person name="Konno H."/>
            <person name="Nakano K."/>
            <person name="Ninomiya N."/>
            <person name="Nishio T."/>
            <person name="Okada M."/>
            <person name="Plessy C."/>
            <person name="Shibata K."/>
            <person name="Shiraki T."/>
            <person name="Suzuki S."/>
            <person name="Tagami M."/>
            <person name="Waki K."/>
            <person name="Watahiki A."/>
            <person name="Okamura-Oho Y."/>
            <person name="Suzuki H."/>
            <person name="Kawai J."/>
            <person name="Hayashizaki Y."/>
        </authorList>
    </citation>
    <scope>NUCLEOTIDE SEQUENCE [LARGE SCALE MRNA]</scope>
    <source>
        <strain>C57BL/6J</strain>
        <tissue>Bone marrow</tissue>
        <tissue>Testis</tissue>
    </source>
</reference>
<reference key="2">
    <citation type="journal article" date="2002" name="Cytogenet. Genome Res.">
        <title>Identification and characterisation of the gene TWIST NEIGHBOR (TWISTNB) located in the microdeletion syndrome 7p21 region.</title>
        <authorList>
            <person name="Kosan C."/>
            <person name="Kunz J."/>
        </authorList>
    </citation>
    <scope>TISSUE SPECIFICITY</scope>
</reference>
<reference key="3">
    <citation type="journal article" date="2002" name="EMBO Rep.">
        <title>Multiple interactions between RNA polymerase I, TIF-IA and TAF(I) subunits regulate preinitiation complex assembly at the ribosomal gene promoter.</title>
        <authorList>
            <person name="Yuan X."/>
            <person name="Zhao J."/>
            <person name="Zentgraf H."/>
            <person name="Hoffmann-Rohrer U."/>
            <person name="Grummt I."/>
        </authorList>
    </citation>
    <scope>INTERACTION WITH RRN3</scope>
</reference>
<gene>
    <name evidence="2" type="primary">Polr1f</name>
    <name evidence="6" type="synonym">Twistnb</name>
</gene>
<keyword id="KW-0240">DNA-directed RNA polymerase</keyword>
<keyword id="KW-0539">Nucleus</keyword>
<keyword id="KW-0597">Phosphoprotein</keyword>
<keyword id="KW-1185">Reference proteome</keyword>
<keyword id="KW-0804">Transcription</keyword>
<comment type="function">
    <text evidence="2">Component of RNA polymerase I (Pol I), a DNA-dependent RNA polymerase which synthesizes ribosomal RNA precursors using the four ribonucleoside triphosphates as substrates. Through its association with RRN3/TIF-IA may be involved in recruitment of Pol I to rDNA promoters.</text>
</comment>
<comment type="subunit">
    <text evidence="1 2 4">Component of the RNA polymerase I (Pol I) complex consisting of 13 subunits: a ten-subunit catalytic core composed of POLR1A/RPA1, POLR1B/RPA2, POLR1C/RPAC1, POLR1D/RPAC2, POLR1H/RPA12, POLR2E/RPABC1, POLR2F/RPABC2, POLR2H/RPABC3, POLR2K/RPABC4 and POLR2L/RPABC5; a mobile stalk subunit POLR1F/RPA43 protruding from the core and additional subunits homologous to general transcription factors POLR1E/RPA49 and POLR1G/RPA34 (By similarity). Interacts with RRN3/TIF-IA. Interacts with RRN3/TIF-IA.</text>
</comment>
<comment type="subcellular location">
    <subcellularLocation>
        <location evidence="2">Nucleus</location>
        <location evidence="2">Nucleolus</location>
    </subcellularLocation>
</comment>
<comment type="tissue specificity">
    <text evidence="5">Widely expressed.</text>
</comment>
<comment type="similarity">
    <text evidence="7">Belongs to the eukaryotic RPA43 RNA polymerase subunit family.</text>
</comment>
<comment type="sequence caution" evidence="7">
    <conflict type="frameshift">
        <sequence resource="EMBL-CDS" id="BAC25502"/>
    </conflict>
</comment>
<name>RPA43_MOUSE</name>
<proteinExistence type="evidence at protein level"/>
<accession>Q78WZ7</accession>
<accession>Q3U6L1</accession>
<accession>Q8CEP7</accession>
<accession>Q9CS60</accession>
<sequence length="330" mass="36721">MAAGSVESQRSQAASERPVAGQAGVLPCLELPSYAAACALVGSRYSCLVAAPHRRHIALSPRYLSRKRTGIREQLDAELLRYSESLLGVPIAYDNIRVVGELGDIYDDQGHIHLNIEADFVIFCPEPGQTLMGTVNKVSSSHIGCLVHGCFNASIPKPEQMSYEEWQTLEIHVGDELEFDVFRLDSDSAGVFCIRGKLSTTSLQLKHSAVSEDVAETVVEEVVEKTPKKKKKKKDKDTDTCGTVDSVTEVADVTDVTPQEETDIPCSDNVNDFFEEEPKKKKKKKKRHQEDQDPIFQASDSSGYQSDHNKKKKKRKHSEEANFESPKKRQ</sequence>
<feature type="chain" id="PRO_0000288633" description="DNA-directed RNA polymerase I subunit RPA43">
    <location>
        <begin position="1"/>
        <end position="330"/>
    </location>
</feature>
<feature type="region of interest" description="Disordered" evidence="3">
    <location>
        <begin position="251"/>
        <end position="330"/>
    </location>
</feature>
<feature type="compositionally biased region" description="Basic and acidic residues" evidence="3">
    <location>
        <begin position="317"/>
        <end position="330"/>
    </location>
</feature>
<feature type="modified residue" description="Phosphoserine" evidence="2">
    <location>
        <position position="306"/>
    </location>
</feature>
<feature type="modified residue" description="Phosphoserine" evidence="2">
    <location>
        <position position="318"/>
    </location>
</feature>
<feature type="modified residue" description="Phosphoserine" evidence="2">
    <location>
        <position position="325"/>
    </location>
</feature>
<feature type="sequence conflict" description="In Ref. 1; BAE31713." evidence="7" ref="1">
    <original>C</original>
    <variation>S</variation>
    <location>
        <position position="124"/>
    </location>
</feature>
<feature type="sequence conflict" description="In Ref. 1; BAC25502." evidence="7" ref="1">
    <original>T</original>
    <variation>I</variation>
    <location>
        <position position="134"/>
    </location>
</feature>
<feature type="sequence conflict" description="In Ref. 1; BAC25502." evidence="7" ref="1">
    <original>K</original>
    <variation>N</variation>
    <location>
        <position position="225"/>
    </location>
</feature>
<feature type="sequence conflict" description="In Ref. 1; BAC25502." evidence="7" ref="1">
    <original>Q</original>
    <variation>R</variation>
    <location>
        <position position="259"/>
    </location>
</feature>
<evidence type="ECO:0000250" key="1"/>
<evidence type="ECO:0000250" key="2">
    <source>
        <dbReference type="UniProtKB" id="Q3B726"/>
    </source>
</evidence>
<evidence type="ECO:0000256" key="3">
    <source>
        <dbReference type="SAM" id="MobiDB-lite"/>
    </source>
</evidence>
<evidence type="ECO:0000269" key="4">
    <source>
    </source>
</evidence>
<evidence type="ECO:0000269" key="5">
    <source>
    </source>
</evidence>
<evidence type="ECO:0000303" key="6">
    <source>
    </source>
</evidence>
<evidence type="ECO:0000305" key="7"/>
<dbReference type="EMBL" id="AK010829">
    <property type="protein sequence ID" value="BAB27210.1"/>
    <property type="molecule type" value="mRNA"/>
</dbReference>
<dbReference type="EMBL" id="AK017810">
    <property type="protein sequence ID" value="BAB30947.1"/>
    <property type="molecule type" value="mRNA"/>
</dbReference>
<dbReference type="EMBL" id="AK017016">
    <property type="protein sequence ID" value="BAC25502.1"/>
    <property type="status" value="ALT_FRAME"/>
    <property type="molecule type" value="mRNA"/>
</dbReference>
<dbReference type="EMBL" id="AK153090">
    <property type="protein sequence ID" value="BAE31713.1"/>
    <property type="molecule type" value="mRNA"/>
</dbReference>
<dbReference type="CCDS" id="CCDS25877.1"/>
<dbReference type="RefSeq" id="NP_758457.1">
    <property type="nucleotide sequence ID" value="NM_172253.2"/>
</dbReference>
<dbReference type="SMR" id="Q78WZ7"/>
<dbReference type="BioGRID" id="205748">
    <property type="interactions" value="1"/>
</dbReference>
<dbReference type="FunCoup" id="Q78WZ7">
    <property type="interactions" value="1577"/>
</dbReference>
<dbReference type="STRING" id="10090.ENSMUSP00000020877"/>
<dbReference type="iPTMnet" id="Q78WZ7"/>
<dbReference type="PhosphoSitePlus" id="Q78WZ7"/>
<dbReference type="jPOST" id="Q78WZ7"/>
<dbReference type="PaxDb" id="10090-ENSMUSP00000020877"/>
<dbReference type="ProteomicsDB" id="262699"/>
<dbReference type="Pumba" id="Q78WZ7"/>
<dbReference type="Antibodypedia" id="11907">
    <property type="antibodies" value="95 antibodies from 20 providers"/>
</dbReference>
<dbReference type="DNASU" id="28071"/>
<dbReference type="Ensembl" id="ENSMUST00000020877.9">
    <property type="protein sequence ID" value="ENSMUSP00000020877.8"/>
    <property type="gene ID" value="ENSMUSG00000020561.9"/>
</dbReference>
<dbReference type="GeneID" id="28071"/>
<dbReference type="KEGG" id="mmu:28071"/>
<dbReference type="UCSC" id="uc007niu.1">
    <property type="organism name" value="mouse"/>
</dbReference>
<dbReference type="AGR" id="MGI:106292"/>
<dbReference type="CTD" id="221830"/>
<dbReference type="MGI" id="MGI:106292">
    <property type="gene designation" value="Polr1f"/>
</dbReference>
<dbReference type="VEuPathDB" id="HostDB:ENSMUSG00000020561"/>
<dbReference type="eggNOG" id="KOG4134">
    <property type="taxonomic scope" value="Eukaryota"/>
</dbReference>
<dbReference type="GeneTree" id="ENSGT00390000005553"/>
<dbReference type="HOGENOM" id="CLU_048289_0_0_1"/>
<dbReference type="InParanoid" id="Q78WZ7"/>
<dbReference type="OMA" id="LWEEEPK"/>
<dbReference type="OrthoDB" id="10250504at2759"/>
<dbReference type="PhylomeDB" id="Q78WZ7"/>
<dbReference type="TreeFam" id="TF325602"/>
<dbReference type="Reactome" id="R-MMU-5250924">
    <property type="pathway name" value="B-WICH complex positively regulates rRNA expression"/>
</dbReference>
<dbReference type="Reactome" id="R-MMU-73762">
    <property type="pathway name" value="RNA Polymerase I Transcription Initiation"/>
</dbReference>
<dbReference type="Reactome" id="R-MMU-73772">
    <property type="pathway name" value="RNA Polymerase I Promoter Escape"/>
</dbReference>
<dbReference type="Reactome" id="R-MMU-73863">
    <property type="pathway name" value="RNA Polymerase I Transcription Termination"/>
</dbReference>
<dbReference type="BioGRID-ORCS" id="28071">
    <property type="hits" value="26 hits in 77 CRISPR screens"/>
</dbReference>
<dbReference type="PRO" id="PR:Q78WZ7"/>
<dbReference type="Proteomes" id="UP000000589">
    <property type="component" value="Chromosome 12"/>
</dbReference>
<dbReference type="RNAct" id="Q78WZ7">
    <property type="molecule type" value="protein"/>
</dbReference>
<dbReference type="Bgee" id="ENSMUSG00000020561">
    <property type="expression patterns" value="Expressed in manus and 231 other cell types or tissues"/>
</dbReference>
<dbReference type="ExpressionAtlas" id="Q78WZ7">
    <property type="expression patterns" value="baseline and differential"/>
</dbReference>
<dbReference type="GO" id="GO:0005736">
    <property type="term" value="C:RNA polymerase I complex"/>
    <property type="evidence" value="ECO:0007669"/>
    <property type="project" value="Ensembl"/>
</dbReference>
<dbReference type="GO" id="GO:1990830">
    <property type="term" value="P:cellular response to leukemia inhibitory factor"/>
    <property type="evidence" value="ECO:0000270"/>
    <property type="project" value="MGI"/>
</dbReference>
<dbReference type="GO" id="GO:0006352">
    <property type="term" value="P:DNA-templated transcription initiation"/>
    <property type="evidence" value="ECO:0007669"/>
    <property type="project" value="InterPro"/>
</dbReference>
<dbReference type="CDD" id="cd04328">
    <property type="entry name" value="RNAP_I_Rpa43_N"/>
    <property type="match status" value="1"/>
</dbReference>
<dbReference type="FunFam" id="3.30.1490.120:FF:000003">
    <property type="entry name" value="DNA-directed RNA polymerase I subunit RPA43"/>
    <property type="match status" value="1"/>
</dbReference>
<dbReference type="FunFam" id="2.40.50.1060:FF:000006">
    <property type="entry name" value="TWIST neighbor"/>
    <property type="match status" value="1"/>
</dbReference>
<dbReference type="Gene3D" id="2.40.50.1060">
    <property type="match status" value="1"/>
</dbReference>
<dbReference type="Gene3D" id="3.30.1490.120">
    <property type="entry name" value="RNA polymerase Rpb7-like, N-terminal domain"/>
    <property type="match status" value="1"/>
</dbReference>
<dbReference type="InterPro" id="IPR036898">
    <property type="entry name" value="RNA_pol_Rpb7-like_N_sf"/>
</dbReference>
<dbReference type="InterPro" id="IPR041901">
    <property type="entry name" value="RNAP_I_Rpa43_N"/>
</dbReference>
<dbReference type="InterPro" id="IPR041178">
    <property type="entry name" value="RPA43_OB"/>
</dbReference>
<dbReference type="InterPro" id="IPR045113">
    <property type="entry name" value="Rpb7-like"/>
</dbReference>
<dbReference type="InterPro" id="IPR005576">
    <property type="entry name" value="Rpb7-like_N"/>
</dbReference>
<dbReference type="PANTHER" id="PTHR12709:SF5">
    <property type="entry name" value="DNA-DIRECTED RNA POLYMERASE I SUBUNIT RPA43"/>
    <property type="match status" value="1"/>
</dbReference>
<dbReference type="PANTHER" id="PTHR12709">
    <property type="entry name" value="DNA-DIRECTED RNA POLYMERASE II, III"/>
    <property type="match status" value="1"/>
</dbReference>
<dbReference type="Pfam" id="PF17875">
    <property type="entry name" value="RPA43_OB"/>
    <property type="match status" value="1"/>
</dbReference>
<dbReference type="Pfam" id="PF03876">
    <property type="entry name" value="SHS2_Rpb7-N"/>
    <property type="match status" value="1"/>
</dbReference>
<organism>
    <name type="scientific">Mus musculus</name>
    <name type="common">Mouse</name>
    <dbReference type="NCBI Taxonomy" id="10090"/>
    <lineage>
        <taxon>Eukaryota</taxon>
        <taxon>Metazoa</taxon>
        <taxon>Chordata</taxon>
        <taxon>Craniata</taxon>
        <taxon>Vertebrata</taxon>
        <taxon>Euteleostomi</taxon>
        <taxon>Mammalia</taxon>
        <taxon>Eutheria</taxon>
        <taxon>Euarchontoglires</taxon>
        <taxon>Glires</taxon>
        <taxon>Rodentia</taxon>
        <taxon>Myomorpha</taxon>
        <taxon>Muroidea</taxon>
        <taxon>Muridae</taxon>
        <taxon>Murinae</taxon>
        <taxon>Mus</taxon>
        <taxon>Mus</taxon>
    </lineage>
</organism>
<protein>
    <recommendedName>
        <fullName>DNA-directed RNA polymerase I subunit RPA43</fullName>
    </recommendedName>
    <alternativeName>
        <fullName evidence="2">DNA-directed RNA polymerase I subunit F</fullName>
    </alternativeName>
    <alternativeName>
        <fullName evidence="6">Twist neighbor protein</fullName>
    </alternativeName>
</protein>